<accession>Q9F1N0</accession>
<accession>D4ZDU3</accession>
<protein>
    <recommendedName>
        <fullName evidence="1">UDP-N-acetylglucosamine--N-acetylmuramyl-(pentapeptide) pyrophosphoryl-undecaprenol N-acetylglucosamine transferase</fullName>
        <ecNumber evidence="1">2.4.1.227</ecNumber>
    </recommendedName>
    <alternativeName>
        <fullName evidence="1">Undecaprenyl-PP-MurNAc-pentapeptide-UDPGlcNAc GlcNAc transferase</fullName>
    </alternativeName>
</protein>
<name>MURG_SHEVD</name>
<proteinExistence type="inferred from homology"/>
<evidence type="ECO:0000255" key="1">
    <source>
        <dbReference type="HAMAP-Rule" id="MF_00033"/>
    </source>
</evidence>
<dbReference type="EC" id="2.4.1.227" evidence="1"/>
<dbReference type="EMBL" id="AB052554">
    <property type="protein sequence ID" value="BAB19202.1"/>
    <property type="molecule type" value="Genomic_DNA"/>
</dbReference>
<dbReference type="EMBL" id="AP011177">
    <property type="protein sequence ID" value="BAJ04004.1"/>
    <property type="molecule type" value="Genomic_DNA"/>
</dbReference>
<dbReference type="RefSeq" id="WP_013053295.1">
    <property type="nucleotide sequence ID" value="NC_014012.1"/>
</dbReference>
<dbReference type="SMR" id="Q9F1N0"/>
<dbReference type="STRING" id="637905.SVI_4033"/>
<dbReference type="CAZy" id="GT28">
    <property type="family name" value="Glycosyltransferase Family 28"/>
</dbReference>
<dbReference type="KEGG" id="svo:SVI_4033"/>
<dbReference type="eggNOG" id="COG0707">
    <property type="taxonomic scope" value="Bacteria"/>
</dbReference>
<dbReference type="HOGENOM" id="CLU_037404_2_0_6"/>
<dbReference type="OrthoDB" id="9808936at2"/>
<dbReference type="UniPathway" id="UPA00219"/>
<dbReference type="Proteomes" id="UP000002350">
    <property type="component" value="Chromosome"/>
</dbReference>
<dbReference type="GO" id="GO:0005886">
    <property type="term" value="C:plasma membrane"/>
    <property type="evidence" value="ECO:0007669"/>
    <property type="project" value="UniProtKB-SubCell"/>
</dbReference>
<dbReference type="GO" id="GO:0051991">
    <property type="term" value="F:UDP-N-acetyl-D-glucosamine:N-acetylmuramoyl-L-alanyl-D-glutamyl-meso-2,6-diaminopimelyl-D-alanyl-D-alanine-diphosphoundecaprenol 4-beta-N-acetylglucosaminlytransferase activity"/>
    <property type="evidence" value="ECO:0007669"/>
    <property type="project" value="RHEA"/>
</dbReference>
<dbReference type="GO" id="GO:0050511">
    <property type="term" value="F:undecaprenyldiphospho-muramoylpentapeptide beta-N-acetylglucosaminyltransferase activity"/>
    <property type="evidence" value="ECO:0007669"/>
    <property type="project" value="UniProtKB-UniRule"/>
</dbReference>
<dbReference type="GO" id="GO:0005975">
    <property type="term" value="P:carbohydrate metabolic process"/>
    <property type="evidence" value="ECO:0007669"/>
    <property type="project" value="InterPro"/>
</dbReference>
<dbReference type="GO" id="GO:0051301">
    <property type="term" value="P:cell division"/>
    <property type="evidence" value="ECO:0007669"/>
    <property type="project" value="UniProtKB-KW"/>
</dbReference>
<dbReference type="GO" id="GO:0071555">
    <property type="term" value="P:cell wall organization"/>
    <property type="evidence" value="ECO:0007669"/>
    <property type="project" value="UniProtKB-KW"/>
</dbReference>
<dbReference type="GO" id="GO:0030259">
    <property type="term" value="P:lipid glycosylation"/>
    <property type="evidence" value="ECO:0007669"/>
    <property type="project" value="UniProtKB-UniRule"/>
</dbReference>
<dbReference type="GO" id="GO:0009252">
    <property type="term" value="P:peptidoglycan biosynthetic process"/>
    <property type="evidence" value="ECO:0007669"/>
    <property type="project" value="UniProtKB-UniRule"/>
</dbReference>
<dbReference type="GO" id="GO:0008360">
    <property type="term" value="P:regulation of cell shape"/>
    <property type="evidence" value="ECO:0007669"/>
    <property type="project" value="UniProtKB-KW"/>
</dbReference>
<dbReference type="CDD" id="cd03785">
    <property type="entry name" value="GT28_MurG"/>
    <property type="match status" value="1"/>
</dbReference>
<dbReference type="Gene3D" id="3.40.50.2000">
    <property type="entry name" value="Glycogen Phosphorylase B"/>
    <property type="match status" value="2"/>
</dbReference>
<dbReference type="HAMAP" id="MF_00033">
    <property type="entry name" value="MurG"/>
    <property type="match status" value="1"/>
</dbReference>
<dbReference type="InterPro" id="IPR006009">
    <property type="entry name" value="GlcNAc_MurG"/>
</dbReference>
<dbReference type="InterPro" id="IPR007235">
    <property type="entry name" value="Glyco_trans_28_C"/>
</dbReference>
<dbReference type="InterPro" id="IPR004276">
    <property type="entry name" value="GlycoTrans_28_N"/>
</dbReference>
<dbReference type="NCBIfam" id="TIGR01133">
    <property type="entry name" value="murG"/>
    <property type="match status" value="1"/>
</dbReference>
<dbReference type="PANTHER" id="PTHR21015:SF22">
    <property type="entry name" value="GLYCOSYLTRANSFERASE"/>
    <property type="match status" value="1"/>
</dbReference>
<dbReference type="PANTHER" id="PTHR21015">
    <property type="entry name" value="UDP-N-ACETYLGLUCOSAMINE--N-ACETYLMURAMYL-(PENTAPEPTIDE) PYROPHOSPHORYL-UNDECAPRENOL N-ACETYLGLUCOSAMINE TRANSFERASE 1"/>
    <property type="match status" value="1"/>
</dbReference>
<dbReference type="Pfam" id="PF04101">
    <property type="entry name" value="Glyco_tran_28_C"/>
    <property type="match status" value="1"/>
</dbReference>
<dbReference type="Pfam" id="PF03033">
    <property type="entry name" value="Glyco_transf_28"/>
    <property type="match status" value="1"/>
</dbReference>
<dbReference type="SUPFAM" id="SSF53756">
    <property type="entry name" value="UDP-Glycosyltransferase/glycogen phosphorylase"/>
    <property type="match status" value="1"/>
</dbReference>
<keyword id="KW-0131">Cell cycle</keyword>
<keyword id="KW-0132">Cell division</keyword>
<keyword id="KW-0997">Cell inner membrane</keyword>
<keyword id="KW-1003">Cell membrane</keyword>
<keyword id="KW-0133">Cell shape</keyword>
<keyword id="KW-0961">Cell wall biogenesis/degradation</keyword>
<keyword id="KW-0328">Glycosyltransferase</keyword>
<keyword id="KW-0472">Membrane</keyword>
<keyword id="KW-0573">Peptidoglycan synthesis</keyword>
<keyword id="KW-1185">Reference proteome</keyword>
<keyword id="KW-0808">Transferase</keyword>
<sequence length="365" mass="39018">MTNISAEKRILIMAGGTGGHVFPALAVAKYLSQKSWKVRWLGTAERMEARLVPQHGFDIDFIDIKGVRGNGLLRKLAAPFKVMRSVMQARRVIQEFKPDVVLGMGGFASGPGGIAARLSGIPLVLHEQNAIPGMTNKLLSRIASKVLCAFEDTFDNIPAQVVGNPIRKELIALGQSTETDCVEDALKVLVVGGSLGAKVFNDLMPGVTDAVSKTHSITVWHQVGKGNLASVKGDYQHLGQDGSVIVAEFIDDMEAAYSWADVVLCRAGALTVSELAAVGLPSILVPYPHAVDDHQTKNAQVLVNAGGAFLLPQTILDADKLISKLQILASDRAELCHMGERAKDVAIIDATEKVADVCIELAQKD</sequence>
<reference key="1">
    <citation type="journal article" date="2002" name="J. Biochem.">
        <title>Isolation and characterization of the dcw cluster from the piezophilic deep-sea bacterium Shewanella violacea.</title>
        <authorList>
            <person name="Ishii A."/>
            <person name="Nakasone K."/>
            <person name="Sato T."/>
            <person name="Wachi M."/>
            <person name="Sugai M."/>
            <person name="Nagai K."/>
            <person name="Kato C."/>
        </authorList>
    </citation>
    <scope>NUCLEOTIDE SEQUENCE [GENOMIC DNA]</scope>
</reference>
<reference key="2">
    <citation type="journal article" date="2010" name="Mol. Biosyst.">
        <title>Complete genome sequence and comparative analysis of Shewanella violacea, a psychrophilic and piezophilic bacterium from deep sea floor sediments.</title>
        <authorList>
            <person name="Aono E."/>
            <person name="Baba T."/>
            <person name="Ara T."/>
            <person name="Nishi T."/>
            <person name="Nakamichi T."/>
            <person name="Inamoto E."/>
            <person name="Toyonaga H."/>
            <person name="Hasegawa M."/>
            <person name="Takai Y."/>
            <person name="Okumura Y."/>
            <person name="Baba M."/>
            <person name="Tomita M."/>
            <person name="Kato C."/>
            <person name="Oshima T."/>
            <person name="Nakasone K."/>
            <person name="Mori H."/>
        </authorList>
    </citation>
    <scope>NUCLEOTIDE SEQUENCE [LARGE SCALE GENOMIC DNA]</scope>
    <source>
        <strain>JCM 10179 / CIP 106290 / LMG 19151 / DSS12</strain>
    </source>
</reference>
<comment type="function">
    <text evidence="1">Cell wall formation. Catalyzes the transfer of a GlcNAc subunit on undecaprenyl-pyrophosphoryl-MurNAc-pentapeptide (lipid intermediate I) to form undecaprenyl-pyrophosphoryl-MurNAc-(pentapeptide)GlcNAc (lipid intermediate II).</text>
</comment>
<comment type="catalytic activity">
    <reaction evidence="1">
        <text>di-trans,octa-cis-undecaprenyl diphospho-N-acetyl-alpha-D-muramoyl-L-alanyl-D-glutamyl-meso-2,6-diaminopimeloyl-D-alanyl-D-alanine + UDP-N-acetyl-alpha-D-glucosamine = di-trans,octa-cis-undecaprenyl diphospho-[N-acetyl-alpha-D-glucosaminyl-(1-&gt;4)]-N-acetyl-alpha-D-muramoyl-L-alanyl-D-glutamyl-meso-2,6-diaminopimeloyl-D-alanyl-D-alanine + UDP + H(+)</text>
        <dbReference type="Rhea" id="RHEA:31227"/>
        <dbReference type="ChEBI" id="CHEBI:15378"/>
        <dbReference type="ChEBI" id="CHEBI:57705"/>
        <dbReference type="ChEBI" id="CHEBI:58223"/>
        <dbReference type="ChEBI" id="CHEBI:61387"/>
        <dbReference type="ChEBI" id="CHEBI:61388"/>
        <dbReference type="EC" id="2.4.1.227"/>
    </reaction>
</comment>
<comment type="pathway">
    <text evidence="1">Cell wall biogenesis; peptidoglycan biosynthesis.</text>
</comment>
<comment type="subcellular location">
    <subcellularLocation>
        <location evidence="1">Cell inner membrane</location>
        <topology evidence="1">Peripheral membrane protein</topology>
        <orientation evidence="1">Cytoplasmic side</orientation>
    </subcellularLocation>
</comment>
<comment type="similarity">
    <text evidence="1">Belongs to the glycosyltransferase 28 family. MurG subfamily.</text>
</comment>
<feature type="chain" id="PRO_0000109208" description="UDP-N-acetylglucosamine--N-acetylmuramyl-(pentapeptide) pyrophosphoryl-undecaprenol N-acetylglucosamine transferase">
    <location>
        <begin position="1"/>
        <end position="365"/>
    </location>
</feature>
<feature type="binding site" evidence="1">
    <location>
        <begin position="17"/>
        <end position="19"/>
    </location>
    <ligand>
        <name>UDP-N-acetyl-alpha-D-glucosamine</name>
        <dbReference type="ChEBI" id="CHEBI:57705"/>
    </ligand>
</feature>
<feature type="binding site" evidence="1">
    <location>
        <position position="129"/>
    </location>
    <ligand>
        <name>UDP-N-acetyl-alpha-D-glucosamine</name>
        <dbReference type="ChEBI" id="CHEBI:57705"/>
    </ligand>
</feature>
<feature type="binding site" evidence="1">
    <location>
        <position position="167"/>
    </location>
    <ligand>
        <name>UDP-N-acetyl-alpha-D-glucosamine</name>
        <dbReference type="ChEBI" id="CHEBI:57705"/>
    </ligand>
</feature>
<feature type="binding site" evidence="1">
    <location>
        <position position="194"/>
    </location>
    <ligand>
        <name>UDP-N-acetyl-alpha-D-glucosamine</name>
        <dbReference type="ChEBI" id="CHEBI:57705"/>
    </ligand>
</feature>
<feature type="binding site" evidence="1">
    <location>
        <position position="250"/>
    </location>
    <ligand>
        <name>UDP-N-acetyl-alpha-D-glucosamine</name>
        <dbReference type="ChEBI" id="CHEBI:57705"/>
    </ligand>
</feature>
<feature type="binding site" evidence="1">
    <location>
        <begin position="269"/>
        <end position="274"/>
    </location>
    <ligand>
        <name>UDP-N-acetyl-alpha-D-glucosamine</name>
        <dbReference type="ChEBI" id="CHEBI:57705"/>
    </ligand>
</feature>
<feature type="binding site" evidence="1">
    <location>
        <position position="295"/>
    </location>
    <ligand>
        <name>UDP-N-acetyl-alpha-D-glucosamine</name>
        <dbReference type="ChEBI" id="CHEBI:57705"/>
    </ligand>
</feature>
<organism>
    <name type="scientific">Shewanella violacea (strain JCM 10179 / CIP 106290 / LMG 19151 / DSS12)</name>
    <dbReference type="NCBI Taxonomy" id="637905"/>
    <lineage>
        <taxon>Bacteria</taxon>
        <taxon>Pseudomonadati</taxon>
        <taxon>Pseudomonadota</taxon>
        <taxon>Gammaproteobacteria</taxon>
        <taxon>Alteromonadales</taxon>
        <taxon>Shewanellaceae</taxon>
        <taxon>Shewanella</taxon>
    </lineage>
</organism>
<gene>
    <name evidence="1" type="primary">murG</name>
    <name type="ordered locus">SVI_4033</name>
</gene>